<proteinExistence type="inferred from homology"/>
<gene>
    <name evidence="1" type="primary">rplD</name>
    <name type="ordered locus">PBPRA0321</name>
</gene>
<accession>Q6LVB5</accession>
<protein>
    <recommendedName>
        <fullName evidence="1">Large ribosomal subunit protein uL4</fullName>
    </recommendedName>
    <alternativeName>
        <fullName evidence="3">50S ribosomal protein L4</fullName>
    </alternativeName>
</protein>
<name>RL4_PHOPR</name>
<feature type="chain" id="PRO_0000242411" description="Large ribosomal subunit protein uL4">
    <location>
        <begin position="1"/>
        <end position="200"/>
    </location>
</feature>
<feature type="region of interest" description="Disordered" evidence="2">
    <location>
        <begin position="42"/>
        <end position="65"/>
    </location>
</feature>
<organism>
    <name type="scientific">Photobacterium profundum (strain SS9)</name>
    <dbReference type="NCBI Taxonomy" id="298386"/>
    <lineage>
        <taxon>Bacteria</taxon>
        <taxon>Pseudomonadati</taxon>
        <taxon>Pseudomonadota</taxon>
        <taxon>Gammaproteobacteria</taxon>
        <taxon>Vibrionales</taxon>
        <taxon>Vibrionaceae</taxon>
        <taxon>Photobacterium</taxon>
    </lineage>
</organism>
<reference key="1">
    <citation type="journal article" date="2005" name="Science">
        <title>Life at depth: Photobacterium profundum genome sequence and expression analysis.</title>
        <authorList>
            <person name="Vezzi A."/>
            <person name="Campanaro S."/>
            <person name="D'Angelo M."/>
            <person name="Simonato F."/>
            <person name="Vitulo N."/>
            <person name="Lauro F.M."/>
            <person name="Cestaro A."/>
            <person name="Malacrida G."/>
            <person name="Simionati B."/>
            <person name="Cannata N."/>
            <person name="Romualdi C."/>
            <person name="Bartlett D.H."/>
            <person name="Valle G."/>
        </authorList>
    </citation>
    <scope>NUCLEOTIDE SEQUENCE [LARGE SCALE GENOMIC DNA]</scope>
    <source>
        <strain>ATCC BAA-1253 / SS9</strain>
    </source>
</reference>
<sequence length="200" mass="21812">MELVVKGADALTVSETTFGRDFNEALVHQVVVAYAAGARQGTRAQKTRSDVSGGGAKPWRQKGTGRARAGTIRSPLWRTGGVTFAARPQDHSQKVNKKMYRGAMKSILSELVRQERLIVVDNFSVEAPKTKELAAKLKELDLSDVLIVTGELDENLFLAARNLYKVDVRDAATIDPVSLIAFDKIVMTAAAVKQVEEMLA</sequence>
<keyword id="KW-1185">Reference proteome</keyword>
<keyword id="KW-0687">Ribonucleoprotein</keyword>
<keyword id="KW-0689">Ribosomal protein</keyword>
<keyword id="KW-0694">RNA-binding</keyword>
<keyword id="KW-0699">rRNA-binding</keyword>
<dbReference type="EMBL" id="CR378663">
    <property type="protein sequence ID" value="CAG18760.1"/>
    <property type="molecule type" value="Genomic_DNA"/>
</dbReference>
<dbReference type="RefSeq" id="WP_006232340.1">
    <property type="nucleotide sequence ID" value="NC_006370.1"/>
</dbReference>
<dbReference type="SMR" id="Q6LVB5"/>
<dbReference type="STRING" id="298386.PBPRA0321"/>
<dbReference type="KEGG" id="ppr:PBPRA0321"/>
<dbReference type="eggNOG" id="COG0088">
    <property type="taxonomic scope" value="Bacteria"/>
</dbReference>
<dbReference type="HOGENOM" id="CLU_041575_5_2_6"/>
<dbReference type="Proteomes" id="UP000000593">
    <property type="component" value="Chromosome 1"/>
</dbReference>
<dbReference type="GO" id="GO:1990904">
    <property type="term" value="C:ribonucleoprotein complex"/>
    <property type="evidence" value="ECO:0007669"/>
    <property type="project" value="UniProtKB-KW"/>
</dbReference>
<dbReference type="GO" id="GO:0005840">
    <property type="term" value="C:ribosome"/>
    <property type="evidence" value="ECO:0007669"/>
    <property type="project" value="UniProtKB-KW"/>
</dbReference>
<dbReference type="GO" id="GO:0019843">
    <property type="term" value="F:rRNA binding"/>
    <property type="evidence" value="ECO:0007669"/>
    <property type="project" value="UniProtKB-UniRule"/>
</dbReference>
<dbReference type="GO" id="GO:0003735">
    <property type="term" value="F:structural constituent of ribosome"/>
    <property type="evidence" value="ECO:0007669"/>
    <property type="project" value="InterPro"/>
</dbReference>
<dbReference type="GO" id="GO:0006412">
    <property type="term" value="P:translation"/>
    <property type="evidence" value="ECO:0007669"/>
    <property type="project" value="UniProtKB-UniRule"/>
</dbReference>
<dbReference type="FunFam" id="3.40.1370.10:FF:000001">
    <property type="entry name" value="50S ribosomal protein L4"/>
    <property type="match status" value="1"/>
</dbReference>
<dbReference type="Gene3D" id="3.40.1370.10">
    <property type="match status" value="1"/>
</dbReference>
<dbReference type="HAMAP" id="MF_01328_B">
    <property type="entry name" value="Ribosomal_uL4_B"/>
    <property type="match status" value="1"/>
</dbReference>
<dbReference type="InterPro" id="IPR002136">
    <property type="entry name" value="Ribosomal_uL4"/>
</dbReference>
<dbReference type="InterPro" id="IPR013005">
    <property type="entry name" value="Ribosomal_uL4-like"/>
</dbReference>
<dbReference type="InterPro" id="IPR023574">
    <property type="entry name" value="Ribosomal_uL4_dom_sf"/>
</dbReference>
<dbReference type="NCBIfam" id="TIGR03953">
    <property type="entry name" value="rplD_bact"/>
    <property type="match status" value="1"/>
</dbReference>
<dbReference type="PANTHER" id="PTHR10746">
    <property type="entry name" value="50S RIBOSOMAL PROTEIN L4"/>
    <property type="match status" value="1"/>
</dbReference>
<dbReference type="PANTHER" id="PTHR10746:SF6">
    <property type="entry name" value="LARGE RIBOSOMAL SUBUNIT PROTEIN UL4M"/>
    <property type="match status" value="1"/>
</dbReference>
<dbReference type="Pfam" id="PF00573">
    <property type="entry name" value="Ribosomal_L4"/>
    <property type="match status" value="1"/>
</dbReference>
<dbReference type="SUPFAM" id="SSF52166">
    <property type="entry name" value="Ribosomal protein L4"/>
    <property type="match status" value="1"/>
</dbReference>
<evidence type="ECO:0000255" key="1">
    <source>
        <dbReference type="HAMAP-Rule" id="MF_01328"/>
    </source>
</evidence>
<evidence type="ECO:0000256" key="2">
    <source>
        <dbReference type="SAM" id="MobiDB-lite"/>
    </source>
</evidence>
<evidence type="ECO:0000305" key="3"/>
<comment type="function">
    <text evidence="1">One of the primary rRNA binding proteins, this protein initially binds near the 5'-end of the 23S rRNA. It is important during the early stages of 50S assembly. It makes multiple contacts with different domains of the 23S rRNA in the assembled 50S subunit and ribosome.</text>
</comment>
<comment type="function">
    <text evidence="1">Forms part of the polypeptide exit tunnel.</text>
</comment>
<comment type="subunit">
    <text evidence="1">Part of the 50S ribosomal subunit.</text>
</comment>
<comment type="similarity">
    <text evidence="1">Belongs to the universal ribosomal protein uL4 family.</text>
</comment>